<reference key="1">
    <citation type="journal article" date="2009" name="Appl. Environ. Microbiol.">
        <title>Genome analysis of the meat starter culture bacterium Staphylococcus carnosus TM300.</title>
        <authorList>
            <person name="Rosenstein R."/>
            <person name="Nerz C."/>
            <person name="Biswas L."/>
            <person name="Resch A."/>
            <person name="Raddatz G."/>
            <person name="Schuster S.C."/>
            <person name="Goetz F."/>
        </authorList>
    </citation>
    <scope>NUCLEOTIDE SEQUENCE [LARGE SCALE GENOMIC DNA]</scope>
    <source>
        <strain>TM300</strain>
    </source>
</reference>
<sequence>MFHHVSVMLRETIDELNVKKDGVYVDCTLGGAGHALYLLNQLDENGHLIAIDQDLTAIENAKEVLKDHLDQVTFVHSNFRQINQILDDLDIDKVDGIYYDLGVSSPQLDVPERGFSYHQDARLDMRMDQTQELSAYEVVNEWPYEDLVRIFYRYGEEKFSKQIARRIEKTRENEPIETTLQLVDVIKEGIPAKARRKGGHPAKRVFQAIRIAVNDELKAFEDSLEQAIERVKVHGRISVITFHSLEDRLCKQIFQEYEKGPEVPRGLPIIPEEYTPKLKRVNRKPISASEEDLAENNRARSAKLRVAEILK</sequence>
<organism>
    <name type="scientific">Staphylococcus carnosus (strain TM300)</name>
    <dbReference type="NCBI Taxonomy" id="396513"/>
    <lineage>
        <taxon>Bacteria</taxon>
        <taxon>Bacillati</taxon>
        <taxon>Bacillota</taxon>
        <taxon>Bacilli</taxon>
        <taxon>Bacillales</taxon>
        <taxon>Staphylococcaceae</taxon>
        <taxon>Staphylococcus</taxon>
    </lineage>
</organism>
<dbReference type="EC" id="2.1.1.199" evidence="1"/>
<dbReference type="EMBL" id="AM295250">
    <property type="protein sequence ID" value="CAL27702.1"/>
    <property type="molecule type" value="Genomic_DNA"/>
</dbReference>
<dbReference type="RefSeq" id="WP_015900044.1">
    <property type="nucleotide sequence ID" value="NC_012121.1"/>
</dbReference>
<dbReference type="SMR" id="B9DPQ9"/>
<dbReference type="KEGG" id="sca:SCA_0792"/>
<dbReference type="eggNOG" id="COG0275">
    <property type="taxonomic scope" value="Bacteria"/>
</dbReference>
<dbReference type="HOGENOM" id="CLU_038422_2_0_9"/>
<dbReference type="OrthoDB" id="9806637at2"/>
<dbReference type="BioCyc" id="SCAR396513:SCA_RS04015-MONOMER"/>
<dbReference type="Proteomes" id="UP000000444">
    <property type="component" value="Chromosome"/>
</dbReference>
<dbReference type="GO" id="GO:0005737">
    <property type="term" value="C:cytoplasm"/>
    <property type="evidence" value="ECO:0007669"/>
    <property type="project" value="UniProtKB-SubCell"/>
</dbReference>
<dbReference type="GO" id="GO:0071424">
    <property type="term" value="F:rRNA (cytosine-N4-)-methyltransferase activity"/>
    <property type="evidence" value="ECO:0007669"/>
    <property type="project" value="UniProtKB-UniRule"/>
</dbReference>
<dbReference type="GO" id="GO:0070475">
    <property type="term" value="P:rRNA base methylation"/>
    <property type="evidence" value="ECO:0007669"/>
    <property type="project" value="UniProtKB-UniRule"/>
</dbReference>
<dbReference type="FunFam" id="1.10.150.170:FF:000001">
    <property type="entry name" value="Ribosomal RNA small subunit methyltransferase H"/>
    <property type="match status" value="1"/>
</dbReference>
<dbReference type="Gene3D" id="1.10.150.170">
    <property type="entry name" value="Putative methyltransferase TM0872, insert domain"/>
    <property type="match status" value="1"/>
</dbReference>
<dbReference type="Gene3D" id="3.40.50.150">
    <property type="entry name" value="Vaccinia Virus protein VP39"/>
    <property type="match status" value="1"/>
</dbReference>
<dbReference type="HAMAP" id="MF_01007">
    <property type="entry name" value="16SrRNA_methyltr_H"/>
    <property type="match status" value="1"/>
</dbReference>
<dbReference type="InterPro" id="IPR002903">
    <property type="entry name" value="RsmH"/>
</dbReference>
<dbReference type="InterPro" id="IPR023397">
    <property type="entry name" value="SAM-dep_MeTrfase_MraW_recog"/>
</dbReference>
<dbReference type="InterPro" id="IPR029063">
    <property type="entry name" value="SAM-dependent_MTases_sf"/>
</dbReference>
<dbReference type="NCBIfam" id="TIGR00006">
    <property type="entry name" value="16S rRNA (cytosine(1402)-N(4))-methyltransferase RsmH"/>
    <property type="match status" value="1"/>
</dbReference>
<dbReference type="PANTHER" id="PTHR11265:SF0">
    <property type="entry name" value="12S RRNA N4-METHYLCYTIDINE METHYLTRANSFERASE"/>
    <property type="match status" value="1"/>
</dbReference>
<dbReference type="PANTHER" id="PTHR11265">
    <property type="entry name" value="S-ADENOSYL-METHYLTRANSFERASE MRAW"/>
    <property type="match status" value="1"/>
</dbReference>
<dbReference type="Pfam" id="PF01795">
    <property type="entry name" value="Methyltransf_5"/>
    <property type="match status" value="1"/>
</dbReference>
<dbReference type="PIRSF" id="PIRSF004486">
    <property type="entry name" value="MraW"/>
    <property type="match status" value="1"/>
</dbReference>
<dbReference type="SUPFAM" id="SSF81799">
    <property type="entry name" value="Putative methyltransferase TM0872, insert domain"/>
    <property type="match status" value="1"/>
</dbReference>
<dbReference type="SUPFAM" id="SSF53335">
    <property type="entry name" value="S-adenosyl-L-methionine-dependent methyltransferases"/>
    <property type="match status" value="1"/>
</dbReference>
<feature type="chain" id="PRO_0000387141" description="Ribosomal RNA small subunit methyltransferase H">
    <location>
        <begin position="1"/>
        <end position="311"/>
    </location>
</feature>
<feature type="binding site" evidence="1">
    <location>
        <begin position="32"/>
        <end position="34"/>
    </location>
    <ligand>
        <name>S-adenosyl-L-methionine</name>
        <dbReference type="ChEBI" id="CHEBI:59789"/>
    </ligand>
</feature>
<feature type="binding site" evidence="1">
    <location>
        <position position="52"/>
    </location>
    <ligand>
        <name>S-adenosyl-L-methionine</name>
        <dbReference type="ChEBI" id="CHEBI:59789"/>
    </ligand>
</feature>
<feature type="binding site" evidence="1">
    <location>
        <position position="79"/>
    </location>
    <ligand>
        <name>S-adenosyl-L-methionine</name>
        <dbReference type="ChEBI" id="CHEBI:59789"/>
    </ligand>
</feature>
<feature type="binding site" evidence="1">
    <location>
        <position position="100"/>
    </location>
    <ligand>
        <name>S-adenosyl-L-methionine</name>
        <dbReference type="ChEBI" id="CHEBI:59789"/>
    </ligand>
</feature>
<feature type="binding site" evidence="1">
    <location>
        <position position="107"/>
    </location>
    <ligand>
        <name>S-adenosyl-L-methionine</name>
        <dbReference type="ChEBI" id="CHEBI:59789"/>
    </ligand>
</feature>
<gene>
    <name evidence="1" type="primary">rsmH</name>
    <name type="synonym">mraW</name>
    <name type="ordered locus">Sca_0792</name>
</gene>
<accession>B9DPQ9</accession>
<protein>
    <recommendedName>
        <fullName evidence="1">Ribosomal RNA small subunit methyltransferase H</fullName>
        <ecNumber evidence="1">2.1.1.199</ecNumber>
    </recommendedName>
    <alternativeName>
        <fullName evidence="1">16S rRNA m(4)C1402 methyltransferase</fullName>
    </alternativeName>
    <alternativeName>
        <fullName evidence="1">rRNA (cytosine-N(4)-)-methyltransferase RsmH</fullName>
    </alternativeName>
</protein>
<proteinExistence type="inferred from homology"/>
<evidence type="ECO:0000255" key="1">
    <source>
        <dbReference type="HAMAP-Rule" id="MF_01007"/>
    </source>
</evidence>
<keyword id="KW-0963">Cytoplasm</keyword>
<keyword id="KW-0489">Methyltransferase</keyword>
<keyword id="KW-1185">Reference proteome</keyword>
<keyword id="KW-0698">rRNA processing</keyword>
<keyword id="KW-0949">S-adenosyl-L-methionine</keyword>
<keyword id="KW-0808">Transferase</keyword>
<name>RSMH_STACT</name>
<comment type="function">
    <text evidence="1">Specifically methylates the N4 position of cytidine in position 1402 (C1402) of 16S rRNA.</text>
</comment>
<comment type="catalytic activity">
    <reaction evidence="1">
        <text>cytidine(1402) in 16S rRNA + S-adenosyl-L-methionine = N(4)-methylcytidine(1402) in 16S rRNA + S-adenosyl-L-homocysteine + H(+)</text>
        <dbReference type="Rhea" id="RHEA:42928"/>
        <dbReference type="Rhea" id="RHEA-COMP:10286"/>
        <dbReference type="Rhea" id="RHEA-COMP:10287"/>
        <dbReference type="ChEBI" id="CHEBI:15378"/>
        <dbReference type="ChEBI" id="CHEBI:57856"/>
        <dbReference type="ChEBI" id="CHEBI:59789"/>
        <dbReference type="ChEBI" id="CHEBI:74506"/>
        <dbReference type="ChEBI" id="CHEBI:82748"/>
        <dbReference type="EC" id="2.1.1.199"/>
    </reaction>
</comment>
<comment type="subcellular location">
    <subcellularLocation>
        <location evidence="1">Cytoplasm</location>
    </subcellularLocation>
</comment>
<comment type="similarity">
    <text evidence="1">Belongs to the methyltransferase superfamily. RsmH family.</text>
</comment>